<accession>Q0BHN8</accession>
<sequence length="215" mass="23035">MNAPALSPARRTKKLPPLRVGIGGPVGSGKTTLLEMLCKAMRERYDLVAITNDIYTKEDQRLLTVAGALPEERIMGVETGGCPHTAIREDASINLEAVDRMLSRFPDADIVFIESGGDNLAATFSPELSDLTIYVIDVAGGEKIPRKGGPGITKSDLLVINKTDLAPLVGANLDVMASDTKKMRGERPYVMTNLKALDGVADVVAFIEKKGLLTV</sequence>
<proteinExistence type="inferred from homology"/>
<comment type="function">
    <text evidence="1">Facilitates the functional incorporation of the urease nickel metallocenter. This process requires GTP hydrolysis, probably effectuated by UreG.</text>
</comment>
<comment type="subunit">
    <text evidence="1">Homodimer. UreD, UreF and UreG form a complex that acts as a GTP-hydrolysis-dependent molecular chaperone, activating the urease apoprotein by helping to assemble the nickel containing metallocenter of UreC. The UreE protein probably delivers the nickel.</text>
</comment>
<comment type="subcellular location">
    <subcellularLocation>
        <location evidence="1">Cytoplasm</location>
    </subcellularLocation>
</comment>
<comment type="similarity">
    <text evidence="1">Belongs to the SIMIBI class G3E GTPase family. UreG subfamily.</text>
</comment>
<keyword id="KW-0143">Chaperone</keyword>
<keyword id="KW-0963">Cytoplasm</keyword>
<keyword id="KW-0342">GTP-binding</keyword>
<keyword id="KW-0996">Nickel insertion</keyword>
<keyword id="KW-0547">Nucleotide-binding</keyword>
<evidence type="ECO:0000255" key="1">
    <source>
        <dbReference type="HAMAP-Rule" id="MF_01389"/>
    </source>
</evidence>
<feature type="chain" id="PRO_0000347365" description="Urease accessory protein UreG">
    <location>
        <begin position="1"/>
        <end position="215"/>
    </location>
</feature>
<feature type="binding site" evidence="1">
    <location>
        <begin position="24"/>
        <end position="31"/>
    </location>
    <ligand>
        <name>GTP</name>
        <dbReference type="ChEBI" id="CHEBI:37565"/>
    </ligand>
</feature>
<name>UREG_BURCM</name>
<organism>
    <name type="scientific">Burkholderia ambifaria (strain ATCC BAA-244 / DSM 16087 / CCUG 44356 / LMG 19182 / AMMD)</name>
    <name type="common">Burkholderia cepacia (strain AMMD)</name>
    <dbReference type="NCBI Taxonomy" id="339670"/>
    <lineage>
        <taxon>Bacteria</taxon>
        <taxon>Pseudomonadati</taxon>
        <taxon>Pseudomonadota</taxon>
        <taxon>Betaproteobacteria</taxon>
        <taxon>Burkholderiales</taxon>
        <taxon>Burkholderiaceae</taxon>
        <taxon>Burkholderia</taxon>
        <taxon>Burkholderia cepacia complex</taxon>
    </lineage>
</organism>
<gene>
    <name evidence="1" type="primary">ureG</name>
    <name type="ordered locus">Bamb_0776</name>
</gene>
<protein>
    <recommendedName>
        <fullName evidence="1">Urease accessory protein UreG</fullName>
    </recommendedName>
</protein>
<reference key="1">
    <citation type="submission" date="2006-08" db="EMBL/GenBank/DDBJ databases">
        <title>Complete sequence of chromosome 1 of Burkholderia cepacia AMMD.</title>
        <authorList>
            <person name="Copeland A."/>
            <person name="Lucas S."/>
            <person name="Lapidus A."/>
            <person name="Barry K."/>
            <person name="Detter J.C."/>
            <person name="Glavina del Rio T."/>
            <person name="Hammon N."/>
            <person name="Israni S."/>
            <person name="Pitluck S."/>
            <person name="Bruce D."/>
            <person name="Chain P."/>
            <person name="Malfatti S."/>
            <person name="Shin M."/>
            <person name="Vergez L."/>
            <person name="Schmutz J."/>
            <person name="Larimer F."/>
            <person name="Land M."/>
            <person name="Hauser L."/>
            <person name="Kyrpides N."/>
            <person name="Kim E."/>
            <person name="Parke J."/>
            <person name="Coenye T."/>
            <person name="Konstantinidis K."/>
            <person name="Ramette A."/>
            <person name="Tiedje J."/>
            <person name="Richardson P."/>
        </authorList>
    </citation>
    <scope>NUCLEOTIDE SEQUENCE [LARGE SCALE GENOMIC DNA]</scope>
    <source>
        <strain>ATCC BAA-244 / DSM 16087 / CCUG 44356 / LMG 19182 / AMMD</strain>
    </source>
</reference>
<dbReference type="EMBL" id="CP000440">
    <property type="protein sequence ID" value="ABI86335.1"/>
    <property type="molecule type" value="Genomic_DNA"/>
</dbReference>
<dbReference type="RefSeq" id="WP_011656154.1">
    <property type="nucleotide sequence ID" value="NZ_CP009798.1"/>
</dbReference>
<dbReference type="SMR" id="Q0BHN8"/>
<dbReference type="GeneID" id="93083816"/>
<dbReference type="KEGG" id="bam:Bamb_0776"/>
<dbReference type="PATRIC" id="fig|339670.21.peg.816"/>
<dbReference type="eggNOG" id="COG0378">
    <property type="taxonomic scope" value="Bacteria"/>
</dbReference>
<dbReference type="Proteomes" id="UP000000662">
    <property type="component" value="Chromosome 1"/>
</dbReference>
<dbReference type="GO" id="GO:0005737">
    <property type="term" value="C:cytoplasm"/>
    <property type="evidence" value="ECO:0007669"/>
    <property type="project" value="UniProtKB-SubCell"/>
</dbReference>
<dbReference type="GO" id="GO:0005525">
    <property type="term" value="F:GTP binding"/>
    <property type="evidence" value="ECO:0007669"/>
    <property type="project" value="UniProtKB-KW"/>
</dbReference>
<dbReference type="GO" id="GO:0003924">
    <property type="term" value="F:GTPase activity"/>
    <property type="evidence" value="ECO:0007669"/>
    <property type="project" value="InterPro"/>
</dbReference>
<dbReference type="GO" id="GO:0016151">
    <property type="term" value="F:nickel cation binding"/>
    <property type="evidence" value="ECO:0007669"/>
    <property type="project" value="UniProtKB-UniRule"/>
</dbReference>
<dbReference type="GO" id="GO:0043419">
    <property type="term" value="P:urea catabolic process"/>
    <property type="evidence" value="ECO:0007669"/>
    <property type="project" value="InterPro"/>
</dbReference>
<dbReference type="CDD" id="cd05540">
    <property type="entry name" value="UreG"/>
    <property type="match status" value="1"/>
</dbReference>
<dbReference type="FunFam" id="3.40.50.300:FF:000208">
    <property type="entry name" value="Urease accessory protein UreG"/>
    <property type="match status" value="1"/>
</dbReference>
<dbReference type="Gene3D" id="3.40.50.300">
    <property type="entry name" value="P-loop containing nucleotide triphosphate hydrolases"/>
    <property type="match status" value="1"/>
</dbReference>
<dbReference type="HAMAP" id="MF_01389">
    <property type="entry name" value="UreG"/>
    <property type="match status" value="1"/>
</dbReference>
<dbReference type="InterPro" id="IPR003495">
    <property type="entry name" value="CobW/HypB/UreG_nucleotide-bd"/>
</dbReference>
<dbReference type="InterPro" id="IPR027417">
    <property type="entry name" value="P-loop_NTPase"/>
</dbReference>
<dbReference type="InterPro" id="IPR004400">
    <property type="entry name" value="UreG"/>
</dbReference>
<dbReference type="NCBIfam" id="TIGR00101">
    <property type="entry name" value="ureG"/>
    <property type="match status" value="1"/>
</dbReference>
<dbReference type="PANTHER" id="PTHR31715">
    <property type="entry name" value="UREASE ACCESSORY PROTEIN G"/>
    <property type="match status" value="1"/>
</dbReference>
<dbReference type="PANTHER" id="PTHR31715:SF0">
    <property type="entry name" value="UREASE ACCESSORY PROTEIN G"/>
    <property type="match status" value="1"/>
</dbReference>
<dbReference type="Pfam" id="PF02492">
    <property type="entry name" value="cobW"/>
    <property type="match status" value="1"/>
</dbReference>
<dbReference type="PIRSF" id="PIRSF005624">
    <property type="entry name" value="Ni-bind_GTPase"/>
    <property type="match status" value="1"/>
</dbReference>
<dbReference type="SUPFAM" id="SSF52540">
    <property type="entry name" value="P-loop containing nucleoside triphosphate hydrolases"/>
    <property type="match status" value="1"/>
</dbReference>